<keyword id="KW-0014">AIDS</keyword>
<keyword id="KW-1048">Host nucleus</keyword>
<keyword id="KW-0945">Host-virus interaction</keyword>
<keyword id="KW-1090">Inhibition of host innate immune response by virus</keyword>
<keyword id="KW-0899">Viral immunoevasion</keyword>
<keyword id="KW-0946">Virion</keyword>
<proteinExistence type="inferred from homology"/>
<gene>
    <name type="primary">vpx</name>
</gene>
<organismHost>
    <name type="scientific">Homo sapiens</name>
    <name type="common">Human</name>
    <dbReference type="NCBI Taxonomy" id="9606"/>
</organismHost>
<protein>
    <recommendedName>
        <fullName>Protein Vpx</fullName>
    </recommendedName>
    <alternativeName>
        <fullName>Viral protein X</fullName>
    </alternativeName>
    <alternativeName>
        <fullName>X ORF protein</fullName>
    </alternativeName>
</protein>
<dbReference type="EMBL" id="J04542">
    <property type="protein sequence ID" value="AAA76843.1"/>
    <property type="molecule type" value="Genomic_DNA"/>
</dbReference>
<dbReference type="EMBL" id="X52223">
    <property type="protein sequence ID" value="CAA36467.1"/>
    <property type="molecule type" value="Genomic_DNA"/>
</dbReference>
<dbReference type="PIR" id="S12155">
    <property type="entry name" value="S12155"/>
</dbReference>
<dbReference type="SMR" id="P17760"/>
<dbReference type="Proteomes" id="UP000007422">
    <property type="component" value="Segment"/>
</dbReference>
<dbReference type="GO" id="GO:0042025">
    <property type="term" value="C:host cell nucleus"/>
    <property type="evidence" value="ECO:0007669"/>
    <property type="project" value="UniProtKB-SubCell"/>
</dbReference>
<dbReference type="GO" id="GO:0044423">
    <property type="term" value="C:virion component"/>
    <property type="evidence" value="ECO:0007669"/>
    <property type="project" value="UniProtKB-KW"/>
</dbReference>
<dbReference type="GO" id="GO:0052170">
    <property type="term" value="P:symbiont-mediated suppression of host innate immune response"/>
    <property type="evidence" value="ECO:0007669"/>
    <property type="project" value="UniProtKB-KW"/>
</dbReference>
<dbReference type="GO" id="GO:0019058">
    <property type="term" value="P:viral life cycle"/>
    <property type="evidence" value="ECO:0007669"/>
    <property type="project" value="InterPro"/>
</dbReference>
<dbReference type="FunFam" id="1.20.5.4730:FF:000001">
    <property type="match status" value="1"/>
</dbReference>
<dbReference type="Gene3D" id="1.20.5.4730">
    <property type="match status" value="1"/>
</dbReference>
<dbReference type="InterPro" id="IPR053711">
    <property type="entry name" value="Lentiviral_Vpx_assoc_factor"/>
</dbReference>
<dbReference type="InterPro" id="IPR000012">
    <property type="entry name" value="RetroV_VpR/X"/>
</dbReference>
<dbReference type="Pfam" id="PF00522">
    <property type="entry name" value="VPR"/>
    <property type="match status" value="1"/>
</dbReference>
<feature type="chain" id="PRO_0000085389" description="Protein Vpx">
    <location>
        <begin position="1"/>
        <end position="112"/>
    </location>
</feature>
<feature type="region of interest" description="Binds to human NUP153" evidence="4">
    <location>
        <begin position="61"/>
        <end position="80"/>
    </location>
</feature>
<feature type="short sequence motif" description="Nuclear localization signal" evidence="1">
    <location>
        <begin position="65"/>
        <end position="72"/>
    </location>
</feature>
<comment type="function">
    <text evidence="1">Plays a role in nuclear translocation of the viral pre-integration complex (PIC), thus is required for the virus to infect non-dividing cells. Targets specific host proteins for degradation by the 26S proteasome. Acts by associating with the cellular CUL4A-DDB1 E3 ligase complex through direct interaction with host VPRPB/DCAF-1. This change in the E3 ligase substrate specificity results in the degradation of host SAMHD1. In turn, SAMHD1 depletion allows viral replication in host myeloid cells by preventing SAMHD1-mediated hydrolysis of intracellular dNTPs necessary for reverse transcription (By similarity).</text>
</comment>
<comment type="subunit">
    <text evidence="1 2 3">Interacts with the P6 region of unprocessed GAG (By similarity). Interacts with host VPRBP/DCAF1, leading to change substrate specificity of the CUL4A-DDB1 E3 ligase complex (By similarity). Interacts with host NUP153 (By similarity).</text>
</comment>
<comment type="subcellular location">
    <subcellularLocation>
        <location>Virion</location>
    </subcellularLocation>
    <subcellularLocation>
        <location>Host nucleus</location>
    </subcellularLocation>
    <text evidence="1">Nuclear just after virion uncoating, or if expressed in the absence of unprocessed GAG.</text>
</comment>
<comment type="miscellaneous">
    <text>This isolate is from a Gambian case of 'neuro-AIDS'.</text>
</comment>
<comment type="similarity">
    <text evidence="5">Belongs to the lentivirus VPX protein family.</text>
</comment>
<accession>P17760</accession>
<organism>
    <name type="scientific">Human immunodeficiency virus type 2 subtype A (isolate D194)</name>
    <name type="common">HIV-2</name>
    <dbReference type="NCBI Taxonomy" id="11713"/>
    <lineage>
        <taxon>Viruses</taxon>
        <taxon>Riboviria</taxon>
        <taxon>Pararnavirae</taxon>
        <taxon>Artverviricota</taxon>
        <taxon>Revtraviricetes</taxon>
        <taxon>Ortervirales</taxon>
        <taxon>Retroviridae</taxon>
        <taxon>Orthoretrovirinae</taxon>
        <taxon>Lentivirus</taxon>
        <taxon>Human immunodeficiency virus 2</taxon>
    </lineage>
</organism>
<reference key="1">
    <citation type="journal article" date="1989" name="Proc. Natl. Acad. Sci. U.S.A.">
        <title>Molecular cloning of two west African human immunodeficiency virus type 2 isolates that replicate well in macrophages: a Gambian isolate, from a patient with neurologic acquired immunodeficiency syndrome, and a highly divergent Ghanian isolate.</title>
        <authorList>
            <person name="Kuehnel H."/>
            <person name="von Briesen H."/>
            <person name="Dietrich U."/>
            <person name="Adamski M."/>
            <person name="Mix D."/>
            <person name="Biesert L."/>
            <person name="Kreutz R."/>
            <person name="Immelmann A."/>
            <person name="Henco K."/>
            <person name="Meichsner C."/>
            <person name="Andreesen R."/>
            <person name="Gelderblom H."/>
            <person name="Ruebsamen-Waigmann H."/>
        </authorList>
    </citation>
    <scope>NUCLEOTIDE SEQUENCE [GENOMIC DNA]</scope>
</reference>
<reference key="2">
    <citation type="journal article" date="1990" name="Nucleic Acids Res.">
        <title>Nucleotide sequence of HIV-2D194, an isolate from a Gambian case of 'neuro-AIDS', which showed excellent growth in macrophages.</title>
        <authorList>
            <person name="Kuehnel H."/>
            <person name="Kreutz R."/>
            <person name="Ruebsamen-Waigmann H."/>
        </authorList>
    </citation>
    <scope>NUCLEOTIDE SEQUENCE [GENOMIC DNA]</scope>
</reference>
<sequence>MADPRERVPPGNSGEETIGEAFEWLDRTIEALNREAVNHLPRELIFQVWQRSWAYWHDEQGMSTSYTKYRYLCIMQKAVYIHFKKGCTCLGRGHGPGGWRPGPPPPPPPGLV</sequence>
<name>VPX_HV2D1</name>
<evidence type="ECO:0000250" key="1"/>
<evidence type="ECO:0000250" key="2">
    <source>
        <dbReference type="UniProtKB" id="P12454"/>
    </source>
</evidence>
<evidence type="ECO:0000250" key="3">
    <source>
        <dbReference type="UniProtKB" id="P18099"/>
    </source>
</evidence>
<evidence type="ECO:0000250" key="4">
    <source>
        <dbReference type="UniProtKB" id="P19508"/>
    </source>
</evidence>
<evidence type="ECO:0000305" key="5"/>